<accession>A5ISF5</accession>
<organism>
    <name type="scientific">Staphylococcus aureus (strain JH9)</name>
    <dbReference type="NCBI Taxonomy" id="359786"/>
    <lineage>
        <taxon>Bacteria</taxon>
        <taxon>Bacillati</taxon>
        <taxon>Bacillota</taxon>
        <taxon>Bacilli</taxon>
        <taxon>Bacillales</taxon>
        <taxon>Staphylococcaceae</taxon>
        <taxon>Staphylococcus</taxon>
    </lineage>
</organism>
<reference key="1">
    <citation type="submission" date="2007-05" db="EMBL/GenBank/DDBJ databases">
        <title>Complete sequence of chromosome of Staphylococcus aureus subsp. aureus JH9.</title>
        <authorList>
            <consortium name="US DOE Joint Genome Institute"/>
            <person name="Copeland A."/>
            <person name="Lucas S."/>
            <person name="Lapidus A."/>
            <person name="Barry K."/>
            <person name="Detter J.C."/>
            <person name="Glavina del Rio T."/>
            <person name="Hammon N."/>
            <person name="Israni S."/>
            <person name="Pitluck S."/>
            <person name="Chain P."/>
            <person name="Malfatti S."/>
            <person name="Shin M."/>
            <person name="Vergez L."/>
            <person name="Schmutz J."/>
            <person name="Larimer F."/>
            <person name="Land M."/>
            <person name="Hauser L."/>
            <person name="Kyrpides N."/>
            <person name="Kim E."/>
            <person name="Tomasz A."/>
            <person name="Richardson P."/>
        </authorList>
    </citation>
    <scope>NUCLEOTIDE SEQUENCE [LARGE SCALE GENOMIC DNA]</scope>
    <source>
        <strain>JH9</strain>
    </source>
</reference>
<comment type="function">
    <text evidence="1">Responsible for synthesis of pseudouridine from uracil-55 in the psi GC loop of transfer RNAs.</text>
</comment>
<comment type="catalytic activity">
    <reaction evidence="1">
        <text>uridine(55) in tRNA = pseudouridine(55) in tRNA</text>
        <dbReference type="Rhea" id="RHEA:42532"/>
        <dbReference type="Rhea" id="RHEA-COMP:10101"/>
        <dbReference type="Rhea" id="RHEA-COMP:10102"/>
        <dbReference type="ChEBI" id="CHEBI:65314"/>
        <dbReference type="ChEBI" id="CHEBI:65315"/>
        <dbReference type="EC" id="5.4.99.25"/>
    </reaction>
</comment>
<comment type="similarity">
    <text evidence="1">Belongs to the pseudouridine synthase TruB family. Type 1 subfamily.</text>
</comment>
<gene>
    <name evidence="1" type="primary">truB</name>
    <name type="ordered locus">SaurJH9_1331</name>
</gene>
<proteinExistence type="inferred from homology"/>
<feature type="chain" id="PRO_1000084692" description="tRNA pseudouridine synthase B">
    <location>
        <begin position="1"/>
        <end position="305"/>
    </location>
</feature>
<feature type="active site" description="Nucleophile" evidence="1">
    <location>
        <position position="39"/>
    </location>
</feature>
<dbReference type="EC" id="5.4.99.25" evidence="1"/>
<dbReference type="EMBL" id="CP000703">
    <property type="protein sequence ID" value="ABQ49128.1"/>
    <property type="molecule type" value="Genomic_DNA"/>
</dbReference>
<dbReference type="RefSeq" id="WP_000282298.1">
    <property type="nucleotide sequence ID" value="NC_009487.1"/>
</dbReference>
<dbReference type="SMR" id="A5ISF5"/>
<dbReference type="KEGG" id="saj:SaurJH9_1331"/>
<dbReference type="HOGENOM" id="CLU_032087_0_1_9"/>
<dbReference type="GO" id="GO:0003723">
    <property type="term" value="F:RNA binding"/>
    <property type="evidence" value="ECO:0007669"/>
    <property type="project" value="InterPro"/>
</dbReference>
<dbReference type="GO" id="GO:0160148">
    <property type="term" value="F:tRNA pseudouridine(55) synthase activity"/>
    <property type="evidence" value="ECO:0007669"/>
    <property type="project" value="UniProtKB-EC"/>
</dbReference>
<dbReference type="GO" id="GO:1990481">
    <property type="term" value="P:mRNA pseudouridine synthesis"/>
    <property type="evidence" value="ECO:0007669"/>
    <property type="project" value="TreeGrafter"/>
</dbReference>
<dbReference type="GO" id="GO:0031119">
    <property type="term" value="P:tRNA pseudouridine synthesis"/>
    <property type="evidence" value="ECO:0007669"/>
    <property type="project" value="UniProtKB-UniRule"/>
</dbReference>
<dbReference type="CDD" id="cd02573">
    <property type="entry name" value="PseudoU_synth_EcTruB"/>
    <property type="match status" value="1"/>
</dbReference>
<dbReference type="FunFam" id="3.30.2350.10:FF:000011">
    <property type="entry name" value="tRNA pseudouridine synthase B"/>
    <property type="match status" value="1"/>
</dbReference>
<dbReference type="Gene3D" id="3.30.2350.10">
    <property type="entry name" value="Pseudouridine synthase"/>
    <property type="match status" value="1"/>
</dbReference>
<dbReference type="HAMAP" id="MF_01080">
    <property type="entry name" value="TruB_bact"/>
    <property type="match status" value="1"/>
</dbReference>
<dbReference type="InterPro" id="IPR020103">
    <property type="entry name" value="PsdUridine_synth_cat_dom_sf"/>
</dbReference>
<dbReference type="InterPro" id="IPR002501">
    <property type="entry name" value="PsdUridine_synth_N"/>
</dbReference>
<dbReference type="InterPro" id="IPR014780">
    <property type="entry name" value="tRNA_psdUridine_synth_TruB"/>
</dbReference>
<dbReference type="InterPro" id="IPR032819">
    <property type="entry name" value="TruB_C"/>
</dbReference>
<dbReference type="NCBIfam" id="TIGR00431">
    <property type="entry name" value="TruB"/>
    <property type="match status" value="1"/>
</dbReference>
<dbReference type="PANTHER" id="PTHR13767:SF2">
    <property type="entry name" value="PSEUDOURIDYLATE SYNTHASE TRUB1"/>
    <property type="match status" value="1"/>
</dbReference>
<dbReference type="PANTHER" id="PTHR13767">
    <property type="entry name" value="TRNA-PSEUDOURIDINE SYNTHASE"/>
    <property type="match status" value="1"/>
</dbReference>
<dbReference type="Pfam" id="PF16198">
    <property type="entry name" value="TruB_C_2"/>
    <property type="match status" value="1"/>
</dbReference>
<dbReference type="Pfam" id="PF01509">
    <property type="entry name" value="TruB_N"/>
    <property type="match status" value="1"/>
</dbReference>
<dbReference type="SUPFAM" id="SSF55120">
    <property type="entry name" value="Pseudouridine synthase"/>
    <property type="match status" value="1"/>
</dbReference>
<keyword id="KW-0413">Isomerase</keyword>
<keyword id="KW-0819">tRNA processing</keyword>
<evidence type="ECO:0000255" key="1">
    <source>
        <dbReference type="HAMAP-Rule" id="MF_01080"/>
    </source>
</evidence>
<name>TRUB_STAA9</name>
<sequence length="305" mass="34606">MYNGILPVYKERGLTSHDVVFKLRKILKTKKIGHTGTLDPEVAGVLPVCIGNATRVSDYVMDMGKAYEATVSIGRSTTTEDQTGDTLETKGVHSADFNKDDIDRLLENFKGVIEQIPPMYSSVKVNGKKLYEYARNNETVERPKRKVNIKDIGRISELDFKENECHFKIRVICGKGTYIRTLATDIGVKLGFPAHMSKLTRIESGGFVLKDSLTLEQIKELHEQDSLQNKLFPLEYGLKGLPSIKIKDSHIKKRILNGQKFNKNEFDNKIKDQIVFIDDDSEKVLAIYMVHPTKESEIKPKKVFN</sequence>
<protein>
    <recommendedName>
        <fullName evidence="1">tRNA pseudouridine synthase B</fullName>
        <ecNumber evidence="1">5.4.99.25</ecNumber>
    </recommendedName>
    <alternativeName>
        <fullName evidence="1">tRNA pseudouridine(55) synthase</fullName>
        <shortName evidence="1">Psi55 synthase</shortName>
    </alternativeName>
    <alternativeName>
        <fullName evidence="1">tRNA pseudouridylate synthase</fullName>
    </alternativeName>
    <alternativeName>
        <fullName evidence="1">tRNA-uridine isomerase</fullName>
    </alternativeName>
</protein>